<keyword id="KW-0067">ATP-binding</keyword>
<keyword id="KW-0315">Glutamine amidotransferase</keyword>
<keyword id="KW-0436">Ligase</keyword>
<keyword id="KW-0460">Magnesium</keyword>
<keyword id="KW-0479">Metal-binding</keyword>
<keyword id="KW-0547">Nucleotide-binding</keyword>
<keyword id="KW-0665">Pyrimidine biosynthesis</keyword>
<protein>
    <recommendedName>
        <fullName evidence="1">CTP synthase</fullName>
        <ecNumber evidence="1">6.3.4.2</ecNumber>
    </recommendedName>
    <alternativeName>
        <fullName evidence="1">Cytidine 5'-triphosphate synthase</fullName>
    </alternativeName>
    <alternativeName>
        <fullName evidence="1">Cytidine triphosphate synthetase</fullName>
        <shortName evidence="1">CTP synthetase</shortName>
        <shortName evidence="1">CTPS</shortName>
    </alternativeName>
    <alternativeName>
        <fullName evidence="1">UTP--ammonia ligase</fullName>
    </alternativeName>
</protein>
<proteinExistence type="inferred from homology"/>
<dbReference type="EC" id="6.3.4.2" evidence="1"/>
<dbReference type="EMBL" id="CP000656">
    <property type="protein sequence ID" value="ABP45976.1"/>
    <property type="molecule type" value="Genomic_DNA"/>
</dbReference>
<dbReference type="SMR" id="A4T9Y6"/>
<dbReference type="STRING" id="350054.Mflv_3502"/>
<dbReference type="MEROPS" id="C26.964"/>
<dbReference type="KEGG" id="mgi:Mflv_3502"/>
<dbReference type="eggNOG" id="COG0504">
    <property type="taxonomic scope" value="Bacteria"/>
</dbReference>
<dbReference type="HOGENOM" id="CLU_011675_5_0_11"/>
<dbReference type="OrthoDB" id="9801107at2"/>
<dbReference type="UniPathway" id="UPA00159">
    <property type="reaction ID" value="UER00277"/>
</dbReference>
<dbReference type="GO" id="GO:0005829">
    <property type="term" value="C:cytosol"/>
    <property type="evidence" value="ECO:0007669"/>
    <property type="project" value="TreeGrafter"/>
</dbReference>
<dbReference type="GO" id="GO:0005524">
    <property type="term" value="F:ATP binding"/>
    <property type="evidence" value="ECO:0007669"/>
    <property type="project" value="UniProtKB-KW"/>
</dbReference>
<dbReference type="GO" id="GO:0003883">
    <property type="term" value="F:CTP synthase activity"/>
    <property type="evidence" value="ECO:0007669"/>
    <property type="project" value="UniProtKB-UniRule"/>
</dbReference>
<dbReference type="GO" id="GO:0004359">
    <property type="term" value="F:glutaminase activity"/>
    <property type="evidence" value="ECO:0007669"/>
    <property type="project" value="RHEA"/>
</dbReference>
<dbReference type="GO" id="GO:0042802">
    <property type="term" value="F:identical protein binding"/>
    <property type="evidence" value="ECO:0007669"/>
    <property type="project" value="TreeGrafter"/>
</dbReference>
<dbReference type="GO" id="GO:0046872">
    <property type="term" value="F:metal ion binding"/>
    <property type="evidence" value="ECO:0007669"/>
    <property type="project" value="UniProtKB-KW"/>
</dbReference>
<dbReference type="GO" id="GO:0044210">
    <property type="term" value="P:'de novo' CTP biosynthetic process"/>
    <property type="evidence" value="ECO:0007669"/>
    <property type="project" value="UniProtKB-UniRule"/>
</dbReference>
<dbReference type="GO" id="GO:0019856">
    <property type="term" value="P:pyrimidine nucleobase biosynthetic process"/>
    <property type="evidence" value="ECO:0007669"/>
    <property type="project" value="TreeGrafter"/>
</dbReference>
<dbReference type="CDD" id="cd03113">
    <property type="entry name" value="CTPS_N"/>
    <property type="match status" value="1"/>
</dbReference>
<dbReference type="CDD" id="cd01746">
    <property type="entry name" value="GATase1_CTP_Synthase"/>
    <property type="match status" value="1"/>
</dbReference>
<dbReference type="FunFam" id="3.40.50.300:FF:000009">
    <property type="entry name" value="CTP synthase"/>
    <property type="match status" value="1"/>
</dbReference>
<dbReference type="FunFam" id="3.40.50.880:FF:000002">
    <property type="entry name" value="CTP synthase"/>
    <property type="match status" value="1"/>
</dbReference>
<dbReference type="Gene3D" id="3.40.50.880">
    <property type="match status" value="1"/>
</dbReference>
<dbReference type="Gene3D" id="3.40.50.300">
    <property type="entry name" value="P-loop containing nucleotide triphosphate hydrolases"/>
    <property type="match status" value="1"/>
</dbReference>
<dbReference type="HAMAP" id="MF_01227">
    <property type="entry name" value="PyrG"/>
    <property type="match status" value="1"/>
</dbReference>
<dbReference type="InterPro" id="IPR029062">
    <property type="entry name" value="Class_I_gatase-like"/>
</dbReference>
<dbReference type="InterPro" id="IPR004468">
    <property type="entry name" value="CTP_synthase"/>
</dbReference>
<dbReference type="InterPro" id="IPR017456">
    <property type="entry name" value="CTP_synthase_N"/>
</dbReference>
<dbReference type="InterPro" id="IPR017926">
    <property type="entry name" value="GATASE"/>
</dbReference>
<dbReference type="InterPro" id="IPR033828">
    <property type="entry name" value="GATase1_CTP_Synthase"/>
</dbReference>
<dbReference type="InterPro" id="IPR027417">
    <property type="entry name" value="P-loop_NTPase"/>
</dbReference>
<dbReference type="NCBIfam" id="NF003792">
    <property type="entry name" value="PRK05380.1"/>
    <property type="match status" value="1"/>
</dbReference>
<dbReference type="NCBIfam" id="TIGR00337">
    <property type="entry name" value="PyrG"/>
    <property type="match status" value="1"/>
</dbReference>
<dbReference type="PANTHER" id="PTHR11550">
    <property type="entry name" value="CTP SYNTHASE"/>
    <property type="match status" value="1"/>
</dbReference>
<dbReference type="PANTHER" id="PTHR11550:SF0">
    <property type="entry name" value="CTP SYNTHASE-RELATED"/>
    <property type="match status" value="1"/>
</dbReference>
<dbReference type="Pfam" id="PF06418">
    <property type="entry name" value="CTP_synth_N"/>
    <property type="match status" value="1"/>
</dbReference>
<dbReference type="Pfam" id="PF00117">
    <property type="entry name" value="GATase"/>
    <property type="match status" value="1"/>
</dbReference>
<dbReference type="SUPFAM" id="SSF52317">
    <property type="entry name" value="Class I glutamine amidotransferase-like"/>
    <property type="match status" value="1"/>
</dbReference>
<dbReference type="SUPFAM" id="SSF52540">
    <property type="entry name" value="P-loop containing nucleoside triphosphate hydrolases"/>
    <property type="match status" value="1"/>
</dbReference>
<dbReference type="PROSITE" id="PS51273">
    <property type="entry name" value="GATASE_TYPE_1"/>
    <property type="match status" value="1"/>
</dbReference>
<evidence type="ECO:0000255" key="1">
    <source>
        <dbReference type="HAMAP-Rule" id="MF_01227"/>
    </source>
</evidence>
<evidence type="ECO:0000256" key="2">
    <source>
        <dbReference type="SAM" id="MobiDB-lite"/>
    </source>
</evidence>
<name>PYRG_MYCGI</name>
<feature type="chain" id="PRO_1000139494" description="CTP synthase">
    <location>
        <begin position="1"/>
        <end position="585"/>
    </location>
</feature>
<feature type="domain" description="Glutamine amidotransferase type-1" evidence="1">
    <location>
        <begin position="306"/>
        <end position="554"/>
    </location>
</feature>
<feature type="region of interest" description="Amidoligase domain" evidence="1">
    <location>
        <begin position="1"/>
        <end position="281"/>
    </location>
</feature>
<feature type="region of interest" description="Disordered" evidence="2">
    <location>
        <begin position="564"/>
        <end position="585"/>
    </location>
</feature>
<feature type="compositionally biased region" description="Basic and acidic residues" evidence="2">
    <location>
        <begin position="576"/>
        <end position="585"/>
    </location>
</feature>
<feature type="active site" description="Nucleophile; for glutamine hydrolysis" evidence="1">
    <location>
        <position position="396"/>
    </location>
</feature>
<feature type="active site" evidence="1">
    <location>
        <position position="527"/>
    </location>
</feature>
<feature type="active site" evidence="1">
    <location>
        <position position="529"/>
    </location>
</feature>
<feature type="binding site" evidence="1">
    <location>
        <position position="23"/>
    </location>
    <ligand>
        <name>CTP</name>
        <dbReference type="ChEBI" id="CHEBI:37563"/>
        <note>allosteric inhibitor</note>
    </ligand>
</feature>
<feature type="binding site" evidence="1">
    <location>
        <position position="23"/>
    </location>
    <ligand>
        <name>UTP</name>
        <dbReference type="ChEBI" id="CHEBI:46398"/>
    </ligand>
</feature>
<feature type="binding site" evidence="1">
    <location>
        <begin position="24"/>
        <end position="29"/>
    </location>
    <ligand>
        <name>ATP</name>
        <dbReference type="ChEBI" id="CHEBI:30616"/>
    </ligand>
</feature>
<feature type="binding site" evidence="1">
    <location>
        <position position="81"/>
    </location>
    <ligand>
        <name>ATP</name>
        <dbReference type="ChEBI" id="CHEBI:30616"/>
    </ligand>
</feature>
<feature type="binding site" evidence="1">
    <location>
        <position position="81"/>
    </location>
    <ligand>
        <name>Mg(2+)</name>
        <dbReference type="ChEBI" id="CHEBI:18420"/>
    </ligand>
</feature>
<feature type="binding site" evidence="1">
    <location>
        <position position="155"/>
    </location>
    <ligand>
        <name>Mg(2+)</name>
        <dbReference type="ChEBI" id="CHEBI:18420"/>
    </ligand>
</feature>
<feature type="binding site" evidence="1">
    <location>
        <begin position="162"/>
        <end position="164"/>
    </location>
    <ligand>
        <name>CTP</name>
        <dbReference type="ChEBI" id="CHEBI:37563"/>
        <note>allosteric inhibitor</note>
    </ligand>
</feature>
<feature type="binding site" evidence="1">
    <location>
        <begin position="202"/>
        <end position="207"/>
    </location>
    <ligand>
        <name>CTP</name>
        <dbReference type="ChEBI" id="CHEBI:37563"/>
        <note>allosteric inhibitor</note>
    </ligand>
</feature>
<feature type="binding site" evidence="1">
    <location>
        <begin position="202"/>
        <end position="207"/>
    </location>
    <ligand>
        <name>UTP</name>
        <dbReference type="ChEBI" id="CHEBI:46398"/>
    </ligand>
</feature>
<feature type="binding site" evidence="1">
    <location>
        <position position="238"/>
    </location>
    <ligand>
        <name>CTP</name>
        <dbReference type="ChEBI" id="CHEBI:37563"/>
        <note>allosteric inhibitor</note>
    </ligand>
</feature>
<feature type="binding site" evidence="1">
    <location>
        <position position="238"/>
    </location>
    <ligand>
        <name>UTP</name>
        <dbReference type="ChEBI" id="CHEBI:46398"/>
    </ligand>
</feature>
<feature type="binding site" evidence="1">
    <location>
        <position position="369"/>
    </location>
    <ligand>
        <name>L-glutamine</name>
        <dbReference type="ChEBI" id="CHEBI:58359"/>
    </ligand>
</feature>
<feature type="binding site" evidence="1">
    <location>
        <begin position="397"/>
        <end position="400"/>
    </location>
    <ligand>
        <name>L-glutamine</name>
        <dbReference type="ChEBI" id="CHEBI:58359"/>
    </ligand>
</feature>
<feature type="binding site" evidence="1">
    <location>
        <position position="419"/>
    </location>
    <ligand>
        <name>L-glutamine</name>
        <dbReference type="ChEBI" id="CHEBI:58359"/>
    </ligand>
</feature>
<feature type="binding site" evidence="1">
    <location>
        <position position="480"/>
    </location>
    <ligand>
        <name>L-glutamine</name>
        <dbReference type="ChEBI" id="CHEBI:58359"/>
    </ligand>
</feature>
<organism>
    <name type="scientific">Mycolicibacterium gilvum (strain PYR-GCK)</name>
    <name type="common">Mycobacterium gilvum (strain PYR-GCK)</name>
    <dbReference type="NCBI Taxonomy" id="350054"/>
    <lineage>
        <taxon>Bacteria</taxon>
        <taxon>Bacillati</taxon>
        <taxon>Actinomycetota</taxon>
        <taxon>Actinomycetes</taxon>
        <taxon>Mycobacteriales</taxon>
        <taxon>Mycobacteriaceae</taxon>
        <taxon>Mycolicibacterium</taxon>
    </lineage>
</organism>
<comment type="function">
    <text evidence="1">Catalyzes the ATP-dependent amination of UTP to CTP with either L-glutamine or ammonia as the source of nitrogen. Regulates intracellular CTP levels through interactions with the four ribonucleotide triphosphates.</text>
</comment>
<comment type="catalytic activity">
    <reaction evidence="1">
        <text>UTP + L-glutamine + ATP + H2O = CTP + L-glutamate + ADP + phosphate + 2 H(+)</text>
        <dbReference type="Rhea" id="RHEA:26426"/>
        <dbReference type="ChEBI" id="CHEBI:15377"/>
        <dbReference type="ChEBI" id="CHEBI:15378"/>
        <dbReference type="ChEBI" id="CHEBI:29985"/>
        <dbReference type="ChEBI" id="CHEBI:30616"/>
        <dbReference type="ChEBI" id="CHEBI:37563"/>
        <dbReference type="ChEBI" id="CHEBI:43474"/>
        <dbReference type="ChEBI" id="CHEBI:46398"/>
        <dbReference type="ChEBI" id="CHEBI:58359"/>
        <dbReference type="ChEBI" id="CHEBI:456216"/>
        <dbReference type="EC" id="6.3.4.2"/>
    </reaction>
</comment>
<comment type="catalytic activity">
    <reaction evidence="1">
        <text>L-glutamine + H2O = L-glutamate + NH4(+)</text>
        <dbReference type="Rhea" id="RHEA:15889"/>
        <dbReference type="ChEBI" id="CHEBI:15377"/>
        <dbReference type="ChEBI" id="CHEBI:28938"/>
        <dbReference type="ChEBI" id="CHEBI:29985"/>
        <dbReference type="ChEBI" id="CHEBI:58359"/>
    </reaction>
</comment>
<comment type="catalytic activity">
    <reaction evidence="1">
        <text>UTP + NH4(+) + ATP = CTP + ADP + phosphate + 2 H(+)</text>
        <dbReference type="Rhea" id="RHEA:16597"/>
        <dbReference type="ChEBI" id="CHEBI:15378"/>
        <dbReference type="ChEBI" id="CHEBI:28938"/>
        <dbReference type="ChEBI" id="CHEBI:30616"/>
        <dbReference type="ChEBI" id="CHEBI:37563"/>
        <dbReference type="ChEBI" id="CHEBI:43474"/>
        <dbReference type="ChEBI" id="CHEBI:46398"/>
        <dbReference type="ChEBI" id="CHEBI:456216"/>
    </reaction>
</comment>
<comment type="activity regulation">
    <text evidence="1">Allosterically activated by GTP, when glutamine is the substrate; GTP has no effect on the reaction when ammonia is the substrate. The allosteric effector GTP functions by stabilizing the protein conformation that binds the tetrahedral intermediate(s) formed during glutamine hydrolysis. Inhibited by the product CTP, via allosteric rather than competitive inhibition.</text>
</comment>
<comment type="pathway">
    <text evidence="1">Pyrimidine metabolism; CTP biosynthesis via de novo pathway; CTP from UDP: step 2/2.</text>
</comment>
<comment type="subunit">
    <text evidence="1">Homotetramer.</text>
</comment>
<comment type="miscellaneous">
    <text evidence="1">CTPSs have evolved a hybrid strategy for distinguishing between UTP and CTP. The overlapping regions of the product feedback inhibitory and substrate sites recognize a common feature in both compounds, the triphosphate moiety. To differentiate isosteric substrate and product pyrimidine rings, an additional pocket far from the expected kinase/ligase catalytic site, specifically recognizes the cytosine and ribose portions of the product inhibitor.</text>
</comment>
<comment type="similarity">
    <text evidence="1">Belongs to the CTP synthase family.</text>
</comment>
<gene>
    <name evidence="1" type="primary">pyrG</name>
    <name type="ordered locus">Mflv_3502</name>
</gene>
<accession>A4T9Y6</accession>
<reference key="1">
    <citation type="submission" date="2007-04" db="EMBL/GenBank/DDBJ databases">
        <title>Complete sequence of chromosome of Mycobacterium gilvum PYR-GCK.</title>
        <authorList>
            <consortium name="US DOE Joint Genome Institute"/>
            <person name="Copeland A."/>
            <person name="Lucas S."/>
            <person name="Lapidus A."/>
            <person name="Barry K."/>
            <person name="Detter J.C."/>
            <person name="Glavina del Rio T."/>
            <person name="Hammon N."/>
            <person name="Israni S."/>
            <person name="Dalin E."/>
            <person name="Tice H."/>
            <person name="Pitluck S."/>
            <person name="Chain P."/>
            <person name="Malfatti S."/>
            <person name="Shin M."/>
            <person name="Vergez L."/>
            <person name="Schmutz J."/>
            <person name="Larimer F."/>
            <person name="Land M."/>
            <person name="Hauser L."/>
            <person name="Kyrpides N."/>
            <person name="Mikhailova N."/>
            <person name="Miller C."/>
            <person name="Richardson P."/>
        </authorList>
    </citation>
    <scope>NUCLEOTIDE SEQUENCE [LARGE SCALE GENOMIC DNA]</scope>
    <source>
        <strain>PYR-GCK</strain>
    </source>
</reference>
<sequence length="585" mass="63730">MPALRKHPHTATKHLFVTGGVVSSLGKGLTASSLGQLLTARGLQVTMQKLDPYLNVDPGTMNPFQHGEVFVTEDGAETDLDVGHYERFLDRNLSGSANVTTGQVYSTVIAKERRGEYLGDTVQVIPHITDEIKRRVLEMAEPDEDGNRPDVVITEVGGTVGDIESLPFLEAARQVRHEVGRENCFFLHCSLVPFMAPSGELKTKPTQHSVAALRSIGIQPDALILRCDRDVPESLKNKIALMCDVDIDGVISTPDAPSIYDIPKVLHREELDAYVVRRLNLAFRDVDWTQWNDLLHRVHEPRETVRIALVGKYIDLSDAYLSVAEALRAGGFAHHAKVEIRWIPSDDCETDVGAATALSDVDGVLIPGGFGIRGIEGKVGAIRYARKRGLPLLGLCLGLQCIVIEAARSVGLTEASSAEFDPDTPDPVISTMADQRDAVAGEADLGGTMRLGAYPAVLQKNSLVAKAYDATEVSERHRHRYEVNNAYRERIAESGLQFSGTSPDGQLVEFVEYPADVHPFLVGTQAHPELKSRPTRPHPLFVAFVGAAVEYNNGERLPVDIPAIPTADHQSNGAEHALEDAPARG</sequence>